<evidence type="ECO:0007829" key="1">
    <source>
        <dbReference type="PDB" id="8XA6"/>
    </source>
</evidence>
<evidence type="ECO:0007829" key="2">
    <source>
        <dbReference type="PDB" id="8XA7"/>
    </source>
</evidence>
<keyword id="KW-0002">3D-structure</keyword>
<name>GP33_BPSP1</name>
<gene>
    <name type="primary">33</name>
</gene>
<feature type="chain" id="PRO_0000106142" description="Gene 33 protein">
    <location>
        <begin position="1"/>
        <end position="101"/>
    </location>
</feature>
<feature type="turn" evidence="2">
    <location>
        <begin position="2"/>
        <end position="4"/>
    </location>
</feature>
<feature type="helix" evidence="2">
    <location>
        <begin position="5"/>
        <end position="9"/>
    </location>
</feature>
<feature type="strand" evidence="1">
    <location>
        <begin position="20"/>
        <end position="23"/>
    </location>
</feature>
<feature type="helix" evidence="2">
    <location>
        <begin position="24"/>
        <end position="37"/>
    </location>
</feature>
<feature type="strand" evidence="2">
    <location>
        <begin position="50"/>
        <end position="53"/>
    </location>
</feature>
<feature type="strand" evidence="2">
    <location>
        <begin position="57"/>
        <end position="62"/>
    </location>
</feature>
<feature type="strand" evidence="2">
    <location>
        <begin position="67"/>
        <end position="71"/>
    </location>
</feature>
<feature type="strand" evidence="1">
    <location>
        <begin position="75"/>
        <end position="77"/>
    </location>
</feature>
<feature type="strand" evidence="2">
    <location>
        <begin position="83"/>
        <end position="86"/>
    </location>
</feature>
<feature type="helix" evidence="2">
    <location>
        <begin position="88"/>
        <end position="93"/>
    </location>
</feature>
<dbReference type="EMBL" id="X01807">
    <property type="protein sequence ID" value="CAA25949.1"/>
    <property type="molecule type" value="Genomic_DNA"/>
</dbReference>
<dbReference type="PIR" id="S07265">
    <property type="entry name" value="S07265"/>
</dbReference>
<dbReference type="RefSeq" id="YP_002300429.1">
    <property type="nucleotide sequence ID" value="NC_011421.1"/>
</dbReference>
<dbReference type="PDB" id="8XA6">
    <property type="method" value="EM"/>
    <property type="resolution" value="3.02 A"/>
    <property type="chains" value="H=1-101"/>
</dbReference>
<dbReference type="PDB" id="8XA7">
    <property type="method" value="EM"/>
    <property type="resolution" value="2.94 A"/>
    <property type="chains" value="H=1-101"/>
</dbReference>
<dbReference type="PDBsum" id="8XA6"/>
<dbReference type="PDBsum" id="8XA7"/>
<dbReference type="EMDB" id="EMD-38195"/>
<dbReference type="EMDB" id="EMD-38196"/>
<dbReference type="SMR" id="P06226"/>
<dbReference type="GeneID" id="7009147"/>
<dbReference type="KEGG" id="vg:7009147"/>
<organismHost>
    <name type="scientific">Bacillus subtilis</name>
    <dbReference type="NCBI Taxonomy" id="1423"/>
</organismHost>
<sequence length="101" mass="11903">MQKFLDELEKVRNHTEDYDVYNSEAERTFRGLKAKFQKLIGKRALYICKSTKESRVVTIEAAYDRYIVLSYKYYGMDYEGSTKMSVTYQALLSGEDRLDVE</sequence>
<proteinExistence type="evidence at protein level"/>
<organism>
    <name type="scientific">Bacillus phage SP01</name>
    <name type="common">Bacteriophage SP01</name>
    <dbReference type="NCBI Taxonomy" id="2884427"/>
    <lineage>
        <taxon>Viruses</taxon>
        <taxon>Duplodnaviria</taxon>
        <taxon>Heunggongvirae</taxon>
        <taxon>Uroviricota</taxon>
        <taxon>Caudoviricetes</taxon>
        <taxon>Herelleviridae</taxon>
        <taxon>Spounavirinae</taxon>
        <taxon>Okubovirus</taxon>
        <taxon>Okubovirus SPO1</taxon>
    </lineage>
</organism>
<protein>
    <recommendedName>
        <fullName>Gene 33 protein</fullName>
    </recommendedName>
</protein>
<accession>P06226</accession>
<reference key="1">
    <citation type="journal article" date="1984" name="J. Mol. Biol.">
        <title>Bacteriophage SPO1 genes 33 and 34. Location and primary structure of genes encoding regulatory subunits of Bacillus subtilis RNA polymerase.</title>
        <authorList>
            <person name="Costanzo M."/>
            <person name="Brzustowicz L."/>
            <person name="Hannett N."/>
            <person name="Pero J."/>
        </authorList>
    </citation>
    <scope>NUCLEOTIDE SEQUENCE [GENOMIC DNA]</scope>
</reference>